<keyword id="KW-0963">Cytoplasm</keyword>
<keyword id="KW-0342">GTP-binding</keyword>
<keyword id="KW-0378">Hydrolase</keyword>
<keyword id="KW-0460">Magnesium</keyword>
<keyword id="KW-0479">Metal-binding</keyword>
<keyword id="KW-0547">Nucleotide-binding</keyword>
<keyword id="KW-1185">Reference proteome</keyword>
<feature type="chain" id="PRO_0000386125" description="GTPase Obg">
    <location>
        <begin position="1"/>
        <end position="364"/>
    </location>
</feature>
<feature type="domain" description="Obg" evidence="2">
    <location>
        <begin position="1"/>
        <end position="159"/>
    </location>
</feature>
<feature type="domain" description="OBG-type G" evidence="1">
    <location>
        <begin position="160"/>
        <end position="334"/>
    </location>
</feature>
<feature type="region of interest" description="Disordered" evidence="3">
    <location>
        <begin position="337"/>
        <end position="364"/>
    </location>
</feature>
<feature type="binding site" evidence="1">
    <location>
        <begin position="166"/>
        <end position="173"/>
    </location>
    <ligand>
        <name>GTP</name>
        <dbReference type="ChEBI" id="CHEBI:37565"/>
    </ligand>
</feature>
<feature type="binding site" evidence="1">
    <location>
        <position position="173"/>
    </location>
    <ligand>
        <name>Mg(2+)</name>
        <dbReference type="ChEBI" id="CHEBI:18420"/>
    </ligand>
</feature>
<feature type="binding site" evidence="1">
    <location>
        <begin position="191"/>
        <end position="195"/>
    </location>
    <ligand>
        <name>GTP</name>
        <dbReference type="ChEBI" id="CHEBI:37565"/>
    </ligand>
</feature>
<feature type="binding site" evidence="1">
    <location>
        <position position="193"/>
    </location>
    <ligand>
        <name>Mg(2+)</name>
        <dbReference type="ChEBI" id="CHEBI:18420"/>
    </ligand>
</feature>
<feature type="binding site" evidence="1">
    <location>
        <begin position="213"/>
        <end position="216"/>
    </location>
    <ligand>
        <name>GTP</name>
        <dbReference type="ChEBI" id="CHEBI:37565"/>
    </ligand>
</feature>
<feature type="binding site" evidence="1">
    <location>
        <begin position="284"/>
        <end position="287"/>
    </location>
    <ligand>
        <name>GTP</name>
        <dbReference type="ChEBI" id="CHEBI:37565"/>
    </ligand>
</feature>
<feature type="binding site" evidence="1">
    <location>
        <begin position="315"/>
        <end position="317"/>
    </location>
    <ligand>
        <name>GTP</name>
        <dbReference type="ChEBI" id="CHEBI:37565"/>
    </ligand>
</feature>
<protein>
    <recommendedName>
        <fullName evidence="1">GTPase Obg</fullName>
        <ecNumber evidence="1">3.6.5.-</ecNumber>
    </recommendedName>
    <alternativeName>
        <fullName evidence="1">GTP-binding protein Obg</fullName>
    </alternativeName>
</protein>
<organism>
    <name type="scientific">Polaromonas naphthalenivorans (strain CJ2)</name>
    <dbReference type="NCBI Taxonomy" id="365044"/>
    <lineage>
        <taxon>Bacteria</taxon>
        <taxon>Pseudomonadati</taxon>
        <taxon>Pseudomonadota</taxon>
        <taxon>Betaproteobacteria</taxon>
        <taxon>Burkholderiales</taxon>
        <taxon>Comamonadaceae</taxon>
        <taxon>Polaromonas</taxon>
    </lineage>
</organism>
<accession>A1VK90</accession>
<reference key="1">
    <citation type="journal article" date="2009" name="Environ. Microbiol.">
        <title>The genome of Polaromonas naphthalenivorans strain CJ2, isolated from coal tar-contaminated sediment, reveals physiological and metabolic versatility and evolution through extensive horizontal gene transfer.</title>
        <authorList>
            <person name="Yagi J.M."/>
            <person name="Sims D."/>
            <person name="Brettin T."/>
            <person name="Bruce D."/>
            <person name="Madsen E.L."/>
        </authorList>
    </citation>
    <scope>NUCLEOTIDE SEQUENCE [LARGE SCALE GENOMIC DNA]</scope>
    <source>
        <strain>CJ2</strain>
    </source>
</reference>
<gene>
    <name evidence="1" type="primary">obg</name>
    <name type="ordered locus">Pnap_0749</name>
</gene>
<evidence type="ECO:0000255" key="1">
    <source>
        <dbReference type="HAMAP-Rule" id="MF_01454"/>
    </source>
</evidence>
<evidence type="ECO:0000255" key="2">
    <source>
        <dbReference type="PROSITE-ProRule" id="PRU01231"/>
    </source>
</evidence>
<evidence type="ECO:0000256" key="3">
    <source>
        <dbReference type="SAM" id="MobiDB-lite"/>
    </source>
</evidence>
<dbReference type="EC" id="3.6.5.-" evidence="1"/>
<dbReference type="EMBL" id="CP000529">
    <property type="protein sequence ID" value="ABM36068.1"/>
    <property type="molecule type" value="Genomic_DNA"/>
</dbReference>
<dbReference type="RefSeq" id="WP_011800163.1">
    <property type="nucleotide sequence ID" value="NC_008781.1"/>
</dbReference>
<dbReference type="SMR" id="A1VK90"/>
<dbReference type="STRING" id="365044.Pnap_0749"/>
<dbReference type="KEGG" id="pna:Pnap_0749"/>
<dbReference type="eggNOG" id="COG0536">
    <property type="taxonomic scope" value="Bacteria"/>
</dbReference>
<dbReference type="HOGENOM" id="CLU_011747_2_0_4"/>
<dbReference type="OrthoDB" id="9807318at2"/>
<dbReference type="Proteomes" id="UP000000644">
    <property type="component" value="Chromosome"/>
</dbReference>
<dbReference type="GO" id="GO:0005737">
    <property type="term" value="C:cytoplasm"/>
    <property type="evidence" value="ECO:0007669"/>
    <property type="project" value="UniProtKB-SubCell"/>
</dbReference>
<dbReference type="GO" id="GO:0005525">
    <property type="term" value="F:GTP binding"/>
    <property type="evidence" value="ECO:0007669"/>
    <property type="project" value="UniProtKB-UniRule"/>
</dbReference>
<dbReference type="GO" id="GO:0003924">
    <property type="term" value="F:GTPase activity"/>
    <property type="evidence" value="ECO:0007669"/>
    <property type="project" value="UniProtKB-UniRule"/>
</dbReference>
<dbReference type="GO" id="GO:0000287">
    <property type="term" value="F:magnesium ion binding"/>
    <property type="evidence" value="ECO:0007669"/>
    <property type="project" value="InterPro"/>
</dbReference>
<dbReference type="GO" id="GO:0042254">
    <property type="term" value="P:ribosome biogenesis"/>
    <property type="evidence" value="ECO:0007669"/>
    <property type="project" value="UniProtKB-UniRule"/>
</dbReference>
<dbReference type="CDD" id="cd01898">
    <property type="entry name" value="Obg"/>
    <property type="match status" value="1"/>
</dbReference>
<dbReference type="FunFam" id="2.70.210.12:FF:000001">
    <property type="entry name" value="GTPase Obg"/>
    <property type="match status" value="1"/>
</dbReference>
<dbReference type="Gene3D" id="2.70.210.12">
    <property type="entry name" value="GTP1/OBG domain"/>
    <property type="match status" value="1"/>
</dbReference>
<dbReference type="Gene3D" id="3.40.50.300">
    <property type="entry name" value="P-loop containing nucleotide triphosphate hydrolases"/>
    <property type="match status" value="1"/>
</dbReference>
<dbReference type="HAMAP" id="MF_01454">
    <property type="entry name" value="GTPase_Obg"/>
    <property type="match status" value="1"/>
</dbReference>
<dbReference type="InterPro" id="IPR031167">
    <property type="entry name" value="G_OBG"/>
</dbReference>
<dbReference type="InterPro" id="IPR006073">
    <property type="entry name" value="GTP-bd"/>
</dbReference>
<dbReference type="InterPro" id="IPR014100">
    <property type="entry name" value="GTP-bd_Obg/CgtA"/>
</dbReference>
<dbReference type="InterPro" id="IPR006074">
    <property type="entry name" value="GTP1-OBG_CS"/>
</dbReference>
<dbReference type="InterPro" id="IPR006169">
    <property type="entry name" value="GTP1_OBG_dom"/>
</dbReference>
<dbReference type="InterPro" id="IPR036726">
    <property type="entry name" value="GTP1_OBG_dom_sf"/>
</dbReference>
<dbReference type="InterPro" id="IPR045086">
    <property type="entry name" value="OBG_GTPase"/>
</dbReference>
<dbReference type="InterPro" id="IPR027417">
    <property type="entry name" value="P-loop_NTPase"/>
</dbReference>
<dbReference type="InterPro" id="IPR005225">
    <property type="entry name" value="Small_GTP-bd"/>
</dbReference>
<dbReference type="NCBIfam" id="TIGR02729">
    <property type="entry name" value="Obg_CgtA"/>
    <property type="match status" value="1"/>
</dbReference>
<dbReference type="NCBIfam" id="NF008955">
    <property type="entry name" value="PRK12297.1"/>
    <property type="match status" value="1"/>
</dbReference>
<dbReference type="NCBIfam" id="NF008956">
    <property type="entry name" value="PRK12299.1"/>
    <property type="match status" value="1"/>
</dbReference>
<dbReference type="NCBIfam" id="TIGR00231">
    <property type="entry name" value="small_GTP"/>
    <property type="match status" value="1"/>
</dbReference>
<dbReference type="PANTHER" id="PTHR11702">
    <property type="entry name" value="DEVELOPMENTALLY REGULATED GTP-BINDING PROTEIN-RELATED"/>
    <property type="match status" value="1"/>
</dbReference>
<dbReference type="PANTHER" id="PTHR11702:SF31">
    <property type="entry name" value="MITOCHONDRIAL RIBOSOME-ASSOCIATED GTPASE 2"/>
    <property type="match status" value="1"/>
</dbReference>
<dbReference type="Pfam" id="PF01018">
    <property type="entry name" value="GTP1_OBG"/>
    <property type="match status" value="1"/>
</dbReference>
<dbReference type="Pfam" id="PF01926">
    <property type="entry name" value="MMR_HSR1"/>
    <property type="match status" value="1"/>
</dbReference>
<dbReference type="PIRSF" id="PIRSF002401">
    <property type="entry name" value="GTP_bd_Obg/CgtA"/>
    <property type="match status" value="1"/>
</dbReference>
<dbReference type="PRINTS" id="PR00326">
    <property type="entry name" value="GTP1OBG"/>
</dbReference>
<dbReference type="SUPFAM" id="SSF82051">
    <property type="entry name" value="Obg GTP-binding protein N-terminal domain"/>
    <property type="match status" value="1"/>
</dbReference>
<dbReference type="SUPFAM" id="SSF52540">
    <property type="entry name" value="P-loop containing nucleoside triphosphate hydrolases"/>
    <property type="match status" value="1"/>
</dbReference>
<dbReference type="PROSITE" id="PS51710">
    <property type="entry name" value="G_OBG"/>
    <property type="match status" value="1"/>
</dbReference>
<dbReference type="PROSITE" id="PS00905">
    <property type="entry name" value="GTP1_OBG"/>
    <property type="match status" value="1"/>
</dbReference>
<dbReference type="PROSITE" id="PS51883">
    <property type="entry name" value="OBG"/>
    <property type="match status" value="1"/>
</dbReference>
<comment type="function">
    <text evidence="1">An essential GTPase which binds GTP, GDP and possibly (p)ppGpp with moderate affinity, with high nucleotide exchange rates and a fairly low GTP hydrolysis rate. Plays a role in control of the cell cycle, stress response, ribosome biogenesis and in those bacteria that undergo differentiation, in morphogenesis control.</text>
</comment>
<comment type="cofactor">
    <cofactor evidence="1">
        <name>Mg(2+)</name>
        <dbReference type="ChEBI" id="CHEBI:18420"/>
    </cofactor>
</comment>
<comment type="subunit">
    <text evidence="1">Monomer.</text>
</comment>
<comment type="subcellular location">
    <subcellularLocation>
        <location evidence="1">Cytoplasm</location>
    </subcellularLocation>
</comment>
<comment type="similarity">
    <text evidence="1">Belongs to the TRAFAC class OBG-HflX-like GTPase superfamily. OBG GTPase family.</text>
</comment>
<sequence>MKFVDEAYIDIAAGDGGSGCVSFSHEKYKEFGGPNGGDGGRGGHVYAVADINLNTLVDFRFSRRHEARNGGHGMGSDMFGAKGDDIILKMPVGTILTDAETGEVLFELLVPGEQILIAKGGDGGFGNLRFKSSTNRAPRSKTPGWPGDRKSLKLELKVLADVGLLGMPNAGKSTFISAVSNARPRIADYPFTTLHPNLGVVRVGPEQSFVVADLPGLIEGASEGAGLGHLFLRHLQRTRLLLHIVDLAPFDEGVDPVAQAKAIVGELKKYDEALYKKPRWLVLNKLDMIDADERAAVVKDFVKRFKFKGPVFEISALTREGCEQLVKTIYQHVKKVQKSEQPEEEVDPRFIELPPEPAKPASSD</sequence>
<proteinExistence type="inferred from homology"/>
<name>OBG_POLNA</name>